<keyword id="KW-0066">ATP synthesis</keyword>
<keyword id="KW-0138">CF(0)</keyword>
<keyword id="KW-0150">Chloroplast</keyword>
<keyword id="KW-0375">Hydrogen ion transport</keyword>
<keyword id="KW-0406">Ion transport</keyword>
<keyword id="KW-0472">Membrane</keyword>
<keyword id="KW-0934">Plastid</keyword>
<keyword id="KW-0793">Thylakoid</keyword>
<keyword id="KW-0812">Transmembrane</keyword>
<keyword id="KW-1133">Transmembrane helix</keyword>
<keyword id="KW-0813">Transport</keyword>
<comment type="function">
    <text evidence="1">Key component of the proton channel; it plays a direct role in the translocation of protons across the membrane.</text>
</comment>
<comment type="subunit">
    <text evidence="1">F-type ATPases have 2 components, CF(1) - the catalytic core - and CF(0) - the membrane proton channel. CF(1) has five subunits: alpha(3), beta(3), gamma(1), delta(1), epsilon(1). CF(0) has four main subunits: a, b, b' and c.</text>
</comment>
<comment type="subcellular location">
    <subcellularLocation>
        <location evidence="1">Plastid</location>
        <location evidence="1">Chloroplast thylakoid membrane</location>
        <topology evidence="1">Multi-pass membrane protein</topology>
    </subcellularLocation>
</comment>
<comment type="similarity">
    <text evidence="1">Belongs to the ATPase A chain family.</text>
</comment>
<geneLocation type="chloroplast"/>
<proteinExistence type="inferred from homology"/>
<organism>
    <name type="scientific">Porphyra purpurea</name>
    <name type="common">Red seaweed</name>
    <name type="synonym">Ulva purpurea</name>
    <dbReference type="NCBI Taxonomy" id="2787"/>
    <lineage>
        <taxon>Eukaryota</taxon>
        <taxon>Rhodophyta</taxon>
        <taxon>Bangiophyceae</taxon>
        <taxon>Bangiales</taxon>
        <taxon>Bangiaceae</taxon>
        <taxon>Porphyra</taxon>
    </lineage>
</organism>
<gene>
    <name evidence="1" type="primary">atpI</name>
</gene>
<evidence type="ECO:0000255" key="1">
    <source>
        <dbReference type="HAMAP-Rule" id="MF_01393"/>
    </source>
</evidence>
<reference key="1">
    <citation type="journal article" date="1995" name="Plant Mol. Biol. Rep.">
        <title>Complete nucleotide sequence of the Porphyra purpurea chloroplast genome.</title>
        <authorList>
            <person name="Reith M.E."/>
            <person name="Munholland J."/>
        </authorList>
    </citation>
    <scope>NUCLEOTIDE SEQUENCE [LARGE SCALE GENOMIC DNA]</scope>
    <source>
        <strain>Avonport</strain>
    </source>
</reference>
<sequence>MYQNNLIDFNPYSCLSAVEVGKHLYWKIGSLQLHGQVFIVSWLVIAALLTISFLGTRNLQRIPEKFQNFMEFILEFLQDIAKNQIGEHEYRPWVPYIATLFLFILGCNWAGALIPWKLIHLPEGELAAPTNDINTTVALSLLTSLAYFYAGLSKKGLGYFARYVQPTPVLLPINILEDFTKPLSLSFRLFGNVLADELVVSVFTLLIPILIPLPVMILGLFASSIQALIFSTLSAAYIGEAMEGHGEE</sequence>
<dbReference type="EMBL" id="U38804">
    <property type="protein sequence ID" value="AAC08133.1"/>
    <property type="molecule type" value="Genomic_DNA"/>
</dbReference>
<dbReference type="PIR" id="S73168">
    <property type="entry name" value="S73168"/>
</dbReference>
<dbReference type="RefSeq" id="NP_053857.1">
    <property type="nucleotide sequence ID" value="NC_000925.1"/>
</dbReference>
<dbReference type="SMR" id="P51247"/>
<dbReference type="GeneID" id="809876"/>
<dbReference type="GO" id="GO:0009535">
    <property type="term" value="C:chloroplast thylakoid membrane"/>
    <property type="evidence" value="ECO:0007669"/>
    <property type="project" value="UniProtKB-SubCell"/>
</dbReference>
<dbReference type="GO" id="GO:0005886">
    <property type="term" value="C:plasma membrane"/>
    <property type="evidence" value="ECO:0007669"/>
    <property type="project" value="UniProtKB-UniRule"/>
</dbReference>
<dbReference type="GO" id="GO:0045259">
    <property type="term" value="C:proton-transporting ATP synthase complex"/>
    <property type="evidence" value="ECO:0007669"/>
    <property type="project" value="UniProtKB-KW"/>
</dbReference>
<dbReference type="GO" id="GO:0046933">
    <property type="term" value="F:proton-transporting ATP synthase activity, rotational mechanism"/>
    <property type="evidence" value="ECO:0007669"/>
    <property type="project" value="UniProtKB-UniRule"/>
</dbReference>
<dbReference type="CDD" id="cd00310">
    <property type="entry name" value="ATP-synt_Fo_a_6"/>
    <property type="match status" value="1"/>
</dbReference>
<dbReference type="FunFam" id="1.20.120.220:FF:000001">
    <property type="entry name" value="ATP synthase subunit a, chloroplastic"/>
    <property type="match status" value="1"/>
</dbReference>
<dbReference type="Gene3D" id="1.20.120.220">
    <property type="entry name" value="ATP synthase, F0 complex, subunit A"/>
    <property type="match status" value="1"/>
</dbReference>
<dbReference type="HAMAP" id="MF_01393">
    <property type="entry name" value="ATP_synth_a_bact"/>
    <property type="match status" value="1"/>
</dbReference>
<dbReference type="InterPro" id="IPR045082">
    <property type="entry name" value="ATP_syn_F0_a_bact/chloroplast"/>
</dbReference>
<dbReference type="InterPro" id="IPR000568">
    <property type="entry name" value="ATP_synth_F0_asu"/>
</dbReference>
<dbReference type="InterPro" id="IPR023011">
    <property type="entry name" value="ATP_synth_F0_asu_AS"/>
</dbReference>
<dbReference type="InterPro" id="IPR035908">
    <property type="entry name" value="F0_ATP_A_sf"/>
</dbReference>
<dbReference type="NCBIfam" id="TIGR01131">
    <property type="entry name" value="ATP_synt_6_or_A"/>
    <property type="match status" value="1"/>
</dbReference>
<dbReference type="PANTHER" id="PTHR42823">
    <property type="entry name" value="ATP SYNTHASE SUBUNIT A, CHLOROPLASTIC"/>
    <property type="match status" value="1"/>
</dbReference>
<dbReference type="PANTHER" id="PTHR42823:SF3">
    <property type="entry name" value="ATP SYNTHASE SUBUNIT A, CHLOROPLASTIC"/>
    <property type="match status" value="1"/>
</dbReference>
<dbReference type="Pfam" id="PF00119">
    <property type="entry name" value="ATP-synt_A"/>
    <property type="match status" value="1"/>
</dbReference>
<dbReference type="PRINTS" id="PR00123">
    <property type="entry name" value="ATPASEA"/>
</dbReference>
<dbReference type="SUPFAM" id="SSF81336">
    <property type="entry name" value="F1F0 ATP synthase subunit A"/>
    <property type="match status" value="1"/>
</dbReference>
<dbReference type="PROSITE" id="PS00449">
    <property type="entry name" value="ATPASE_A"/>
    <property type="match status" value="1"/>
</dbReference>
<feature type="chain" id="PRO_0000002598" description="ATP synthase subunit a, chloroplastic">
    <location>
        <begin position="1"/>
        <end position="248"/>
    </location>
</feature>
<feature type="transmembrane region" description="Helical" evidence="1">
    <location>
        <begin position="35"/>
        <end position="55"/>
    </location>
</feature>
<feature type="transmembrane region" description="Helical" evidence="1">
    <location>
        <begin position="94"/>
        <end position="114"/>
    </location>
</feature>
<feature type="transmembrane region" description="Helical" evidence="1">
    <location>
        <begin position="133"/>
        <end position="153"/>
    </location>
</feature>
<feature type="transmembrane region" description="Helical" evidence="1">
    <location>
        <begin position="202"/>
        <end position="222"/>
    </location>
</feature>
<feature type="transmembrane region" description="Helical" evidence="1">
    <location>
        <begin position="224"/>
        <end position="244"/>
    </location>
</feature>
<accession>P51247</accession>
<name>ATPI_PORPU</name>
<protein>
    <recommendedName>
        <fullName evidence="1">ATP synthase subunit a, chloroplastic</fullName>
    </recommendedName>
    <alternativeName>
        <fullName evidence="1">ATP synthase F0 sector subunit a</fullName>
    </alternativeName>
    <alternativeName>
        <fullName evidence="1">F-ATPase subunit IV</fullName>
    </alternativeName>
</protein>